<keyword id="KW-0963">Cytoplasm</keyword>
<keyword id="KW-0206">Cytoskeleton</keyword>
<keyword id="KW-0539">Nucleus</keyword>
<keyword id="KW-1185">Reference proteome</keyword>
<accession>Q6FP43</accession>
<organism>
    <name type="scientific">Candida glabrata (strain ATCC 2001 / BCRC 20586 / JCM 3761 / NBRC 0622 / NRRL Y-65 / CBS 138)</name>
    <name type="common">Yeast</name>
    <name type="synonym">Nakaseomyces glabratus</name>
    <dbReference type="NCBI Taxonomy" id="284593"/>
    <lineage>
        <taxon>Eukaryota</taxon>
        <taxon>Fungi</taxon>
        <taxon>Dikarya</taxon>
        <taxon>Ascomycota</taxon>
        <taxon>Saccharomycotina</taxon>
        <taxon>Saccharomycetes</taxon>
        <taxon>Saccharomycetales</taxon>
        <taxon>Saccharomycetaceae</taxon>
        <taxon>Nakaseomyces</taxon>
    </lineage>
</organism>
<sequence>MVVGPISNLRDDALKDDTLNHIRKEYLESKKQISNLLSQETNTNEFSRKPYPNSSPIRKFDHFANERPTTIDAKLREQLRTGASDVAIEQSLRTNSDESRNQMIYDDMKVMKRIIDGQQESIRELRRALEQERYMNSELQRKYNEMERRFDRLEWFINSHDKFQAYQDIRSNTTKKDFSDPIFNNGLKRRWDEYPIRSFEPDTNINRNNRIFSNYDDSTTRLMQITDPHYRSVG</sequence>
<comment type="function">
    <text evidence="1">Component of the spindle pole body (SPB) required for the proper execution of spindle pole body (SPB) duplication. Links the central plaque component SPC42 to the inner plaque component SPC110 (By similarity).</text>
</comment>
<comment type="subcellular location">
    <subcellularLocation>
        <location evidence="1">Nucleus</location>
    </subcellularLocation>
    <subcellularLocation>
        <location evidence="1">Cytoplasm</location>
        <location evidence="1">Cytoskeleton</location>
        <location evidence="1">Microtubule organizing center</location>
        <location evidence="1">Spindle pole body</location>
    </subcellularLocation>
</comment>
<comment type="similarity">
    <text evidence="3">Belongs to the SPC29 family.</text>
</comment>
<feature type="chain" id="PRO_0000409186" description="Spindle pole component 29">
    <location>
        <begin position="1"/>
        <end position="234"/>
    </location>
</feature>
<feature type="region of interest" description="Disordered" evidence="2">
    <location>
        <begin position="38"/>
        <end position="57"/>
    </location>
</feature>
<proteinExistence type="inferred from homology"/>
<protein>
    <recommendedName>
        <fullName>Spindle pole component 29</fullName>
    </recommendedName>
</protein>
<gene>
    <name type="primary">SPC29</name>
    <name type="ordered locus">CAGL0J06798g</name>
</gene>
<reference key="1">
    <citation type="journal article" date="2004" name="Nature">
        <title>Genome evolution in yeasts.</title>
        <authorList>
            <person name="Dujon B."/>
            <person name="Sherman D."/>
            <person name="Fischer G."/>
            <person name="Durrens P."/>
            <person name="Casaregola S."/>
            <person name="Lafontaine I."/>
            <person name="de Montigny J."/>
            <person name="Marck C."/>
            <person name="Neuveglise C."/>
            <person name="Talla E."/>
            <person name="Goffard N."/>
            <person name="Frangeul L."/>
            <person name="Aigle M."/>
            <person name="Anthouard V."/>
            <person name="Babour A."/>
            <person name="Barbe V."/>
            <person name="Barnay S."/>
            <person name="Blanchin S."/>
            <person name="Beckerich J.-M."/>
            <person name="Beyne E."/>
            <person name="Bleykasten C."/>
            <person name="Boisrame A."/>
            <person name="Boyer J."/>
            <person name="Cattolico L."/>
            <person name="Confanioleri F."/>
            <person name="de Daruvar A."/>
            <person name="Despons L."/>
            <person name="Fabre E."/>
            <person name="Fairhead C."/>
            <person name="Ferry-Dumazet H."/>
            <person name="Groppi A."/>
            <person name="Hantraye F."/>
            <person name="Hennequin C."/>
            <person name="Jauniaux N."/>
            <person name="Joyet P."/>
            <person name="Kachouri R."/>
            <person name="Kerrest A."/>
            <person name="Koszul R."/>
            <person name="Lemaire M."/>
            <person name="Lesur I."/>
            <person name="Ma L."/>
            <person name="Muller H."/>
            <person name="Nicaud J.-M."/>
            <person name="Nikolski M."/>
            <person name="Oztas S."/>
            <person name="Ozier-Kalogeropoulos O."/>
            <person name="Pellenz S."/>
            <person name="Potier S."/>
            <person name="Richard G.-F."/>
            <person name="Straub M.-L."/>
            <person name="Suleau A."/>
            <person name="Swennen D."/>
            <person name="Tekaia F."/>
            <person name="Wesolowski-Louvel M."/>
            <person name="Westhof E."/>
            <person name="Wirth B."/>
            <person name="Zeniou-Meyer M."/>
            <person name="Zivanovic Y."/>
            <person name="Bolotin-Fukuhara M."/>
            <person name="Thierry A."/>
            <person name="Bouchier C."/>
            <person name="Caudron B."/>
            <person name="Scarpelli C."/>
            <person name="Gaillardin C."/>
            <person name="Weissenbach J."/>
            <person name="Wincker P."/>
            <person name="Souciet J.-L."/>
        </authorList>
    </citation>
    <scope>NUCLEOTIDE SEQUENCE [LARGE SCALE GENOMIC DNA]</scope>
    <source>
        <strain>ATCC 2001 / BCRC 20586 / JCM 3761 / NBRC 0622 / NRRL Y-65 / CBS 138</strain>
    </source>
</reference>
<name>SPC29_CANGA</name>
<evidence type="ECO:0000250" key="1"/>
<evidence type="ECO:0000256" key="2">
    <source>
        <dbReference type="SAM" id="MobiDB-lite"/>
    </source>
</evidence>
<evidence type="ECO:0000305" key="3"/>
<dbReference type="EMBL" id="CR380956">
    <property type="protein sequence ID" value="CAG60952.1"/>
    <property type="molecule type" value="Genomic_DNA"/>
</dbReference>
<dbReference type="RefSeq" id="XP_448001.1">
    <property type="nucleotide sequence ID" value="XM_448001.1"/>
</dbReference>
<dbReference type="SMR" id="Q6FP43"/>
<dbReference type="FunCoup" id="Q6FP43">
    <property type="interactions" value="270"/>
</dbReference>
<dbReference type="EnsemblFungi" id="CAGL0J06798g-T">
    <property type="protein sequence ID" value="CAGL0J06798g-T-p1"/>
    <property type="gene ID" value="CAGL0J06798g"/>
</dbReference>
<dbReference type="KEGG" id="cgr:2889553"/>
<dbReference type="CGD" id="CAL0133364">
    <property type="gene designation" value="CAGL0J06798g"/>
</dbReference>
<dbReference type="VEuPathDB" id="FungiDB:CAGL0J06798g"/>
<dbReference type="HOGENOM" id="CLU_1277817_0_0_1"/>
<dbReference type="InParanoid" id="Q6FP43"/>
<dbReference type="Proteomes" id="UP000002428">
    <property type="component" value="Chromosome J"/>
</dbReference>
<dbReference type="GO" id="GO:0005823">
    <property type="term" value="C:central plaque of spindle pole body"/>
    <property type="evidence" value="ECO:0007669"/>
    <property type="project" value="InterPro"/>
</dbReference>
<dbReference type="GO" id="GO:0005737">
    <property type="term" value="C:cytoplasm"/>
    <property type="evidence" value="ECO:0007669"/>
    <property type="project" value="UniProtKB-KW"/>
</dbReference>
<dbReference type="GO" id="GO:0005634">
    <property type="term" value="C:nucleus"/>
    <property type="evidence" value="ECO:0007669"/>
    <property type="project" value="UniProtKB-SubCell"/>
</dbReference>
<dbReference type="GO" id="GO:0005200">
    <property type="term" value="F:structural constituent of cytoskeleton"/>
    <property type="evidence" value="ECO:0007669"/>
    <property type="project" value="InterPro"/>
</dbReference>
<dbReference type="GO" id="GO:0030474">
    <property type="term" value="P:spindle pole body duplication"/>
    <property type="evidence" value="ECO:0007669"/>
    <property type="project" value="InterPro"/>
</dbReference>
<dbReference type="InterPro" id="IPR031392">
    <property type="entry name" value="Spc29"/>
</dbReference>
<dbReference type="Pfam" id="PF17082">
    <property type="entry name" value="Spc29"/>
    <property type="match status" value="1"/>
</dbReference>